<feature type="chain" id="PRO_1000065790" description="Sigma factor-binding protein Crl">
    <location>
        <begin position="1"/>
        <end position="133"/>
    </location>
</feature>
<feature type="region of interest" description="Essential for activity" evidence="1">
    <location>
        <begin position="99"/>
        <end position="122"/>
    </location>
</feature>
<comment type="function">
    <text evidence="1">Binds to the sigma-S subunit of RNA polymerase, activating expression of sigma-S-regulated genes. Stimulates RNA polymerase holoenzyme formation and may bind to several other sigma factors, such as sigma-70 and sigma-32.</text>
</comment>
<comment type="subcellular location">
    <subcellularLocation>
        <location evidence="1">Cytoplasm</location>
    </subcellularLocation>
</comment>
<comment type="similarity">
    <text evidence="1">Belongs to the Crl family.</text>
</comment>
<evidence type="ECO:0000255" key="1">
    <source>
        <dbReference type="HAMAP-Rule" id="MF_01178"/>
    </source>
</evidence>
<dbReference type="EMBL" id="AM286415">
    <property type="protein sequence ID" value="CAL13235.1"/>
    <property type="molecule type" value="Genomic_DNA"/>
</dbReference>
<dbReference type="RefSeq" id="WP_005167534.1">
    <property type="nucleotide sequence ID" value="NC_008800.1"/>
</dbReference>
<dbReference type="RefSeq" id="YP_001007379.1">
    <property type="nucleotide sequence ID" value="NC_008800.1"/>
</dbReference>
<dbReference type="SMR" id="A1JNX8"/>
<dbReference type="KEGG" id="yen:YE3203"/>
<dbReference type="PATRIC" id="fig|393305.7.peg.3406"/>
<dbReference type="eggNOG" id="ENOG502ZQ8E">
    <property type="taxonomic scope" value="Bacteria"/>
</dbReference>
<dbReference type="HOGENOM" id="CLU_136773_0_0_6"/>
<dbReference type="OrthoDB" id="6428303at2"/>
<dbReference type="Proteomes" id="UP000000642">
    <property type="component" value="Chromosome"/>
</dbReference>
<dbReference type="GO" id="GO:0005737">
    <property type="term" value="C:cytoplasm"/>
    <property type="evidence" value="ECO:0007669"/>
    <property type="project" value="UniProtKB-SubCell"/>
</dbReference>
<dbReference type="GO" id="GO:0045893">
    <property type="term" value="P:positive regulation of DNA-templated transcription"/>
    <property type="evidence" value="ECO:0007669"/>
    <property type="project" value="UniProtKB-UniRule"/>
</dbReference>
<dbReference type="Gene3D" id="3.30.310.230">
    <property type="entry name" value="Sigma factor-binding protein Crl monomer"/>
    <property type="match status" value="1"/>
</dbReference>
<dbReference type="HAMAP" id="MF_01178">
    <property type="entry name" value="Crl"/>
    <property type="match status" value="1"/>
</dbReference>
<dbReference type="InterPro" id="IPR009986">
    <property type="entry name" value="Tscrpt_reg_Crl"/>
</dbReference>
<dbReference type="InterPro" id="IPR038208">
    <property type="entry name" value="Tscrpt_reg_Crl_sf"/>
</dbReference>
<dbReference type="NCBIfam" id="NF008217">
    <property type="entry name" value="PRK10984.1"/>
    <property type="match status" value="1"/>
</dbReference>
<dbReference type="Pfam" id="PF07417">
    <property type="entry name" value="Crl"/>
    <property type="match status" value="1"/>
</dbReference>
<reference key="1">
    <citation type="journal article" date="2006" name="PLoS Genet.">
        <title>The complete genome sequence and comparative genome analysis of the high pathogenicity Yersinia enterocolitica strain 8081.</title>
        <authorList>
            <person name="Thomson N.R."/>
            <person name="Howard S."/>
            <person name="Wren B.W."/>
            <person name="Holden M.T.G."/>
            <person name="Crossman L."/>
            <person name="Challis G.L."/>
            <person name="Churcher C."/>
            <person name="Mungall K."/>
            <person name="Brooks K."/>
            <person name="Chillingworth T."/>
            <person name="Feltwell T."/>
            <person name="Abdellah Z."/>
            <person name="Hauser H."/>
            <person name="Jagels K."/>
            <person name="Maddison M."/>
            <person name="Moule S."/>
            <person name="Sanders M."/>
            <person name="Whitehead S."/>
            <person name="Quail M.A."/>
            <person name="Dougan G."/>
            <person name="Parkhill J."/>
            <person name="Prentice M.B."/>
        </authorList>
    </citation>
    <scope>NUCLEOTIDE SEQUENCE [LARGE SCALE GENOMIC DNA]</scope>
    <source>
        <strain>NCTC 13174 / 8081</strain>
    </source>
</reference>
<proteinExistence type="inferred from homology"/>
<sequence>MTSTSAHPKSKLMKRFAALGPYLREGQCQNDRFFFDCLAVCVNVKLAPEKREFWGWWIELEPAADHFTYVYQLGLFNKDGDWKAEKIKDPEVQEKLETTLRGFHKRLAEMLTSIEMRLEPAQDFSEQPVKLSA</sequence>
<organism>
    <name type="scientific">Yersinia enterocolitica serotype O:8 / biotype 1B (strain NCTC 13174 / 8081)</name>
    <dbReference type="NCBI Taxonomy" id="393305"/>
    <lineage>
        <taxon>Bacteria</taxon>
        <taxon>Pseudomonadati</taxon>
        <taxon>Pseudomonadota</taxon>
        <taxon>Gammaproteobacteria</taxon>
        <taxon>Enterobacterales</taxon>
        <taxon>Yersiniaceae</taxon>
        <taxon>Yersinia</taxon>
    </lineage>
</organism>
<protein>
    <recommendedName>
        <fullName evidence="1">Sigma factor-binding protein Crl</fullName>
    </recommendedName>
</protein>
<keyword id="KW-0010">Activator</keyword>
<keyword id="KW-0963">Cytoplasm</keyword>
<keyword id="KW-0804">Transcription</keyword>
<keyword id="KW-0805">Transcription regulation</keyword>
<name>CRL_YERE8</name>
<accession>A1JNX8</accession>
<gene>
    <name evidence="1" type="primary">crl</name>
    <name type="ordered locus">YE3203</name>
</gene>